<reference key="1">
    <citation type="submission" date="2007-02" db="EMBL/GenBank/DDBJ databases">
        <title>Complete sequence of chromosome of Yersinia pestis Pestoides F.</title>
        <authorList>
            <consortium name="US DOE Joint Genome Institute"/>
            <person name="Copeland A."/>
            <person name="Lucas S."/>
            <person name="Lapidus A."/>
            <person name="Barry K."/>
            <person name="Detter J.C."/>
            <person name="Glavina del Rio T."/>
            <person name="Hammon N."/>
            <person name="Israni S."/>
            <person name="Dalin E."/>
            <person name="Tice H."/>
            <person name="Pitluck S."/>
            <person name="Di Bartolo G."/>
            <person name="Chain P."/>
            <person name="Malfatti S."/>
            <person name="Shin M."/>
            <person name="Vergez L."/>
            <person name="Schmutz J."/>
            <person name="Larimer F."/>
            <person name="Land M."/>
            <person name="Hauser L."/>
            <person name="Worsham P."/>
            <person name="Chu M."/>
            <person name="Bearden S."/>
            <person name="Garcia E."/>
            <person name="Richardson P."/>
        </authorList>
    </citation>
    <scope>NUCLEOTIDE SEQUENCE [LARGE SCALE GENOMIC DNA]</scope>
    <source>
        <strain>Pestoides F</strain>
    </source>
</reference>
<comment type="function">
    <text evidence="1">Transfers a succinyl group from succinyl-CoA to L-homoserine, forming succinyl-L-homoserine.</text>
</comment>
<comment type="catalytic activity">
    <reaction evidence="1">
        <text>L-homoserine + succinyl-CoA = O-succinyl-L-homoserine + CoA</text>
        <dbReference type="Rhea" id="RHEA:22008"/>
        <dbReference type="ChEBI" id="CHEBI:57287"/>
        <dbReference type="ChEBI" id="CHEBI:57292"/>
        <dbReference type="ChEBI" id="CHEBI:57476"/>
        <dbReference type="ChEBI" id="CHEBI:57661"/>
        <dbReference type="EC" id="2.3.1.46"/>
    </reaction>
</comment>
<comment type="pathway">
    <text evidence="1">Amino-acid biosynthesis; L-methionine biosynthesis via de novo pathway; O-succinyl-L-homoserine from L-homoserine: step 1/1.</text>
</comment>
<comment type="subcellular location">
    <subcellularLocation>
        <location evidence="1">Cytoplasm</location>
    </subcellularLocation>
</comment>
<comment type="similarity">
    <text evidence="1">Belongs to the MetA family.</text>
</comment>
<protein>
    <recommendedName>
        <fullName evidence="1">Homoserine O-succinyltransferase</fullName>
        <shortName evidence="1">HST</shortName>
        <ecNumber evidence="1">2.3.1.46</ecNumber>
    </recommendedName>
    <alternativeName>
        <fullName evidence="1">Homoserine transsuccinylase</fullName>
        <shortName evidence="1">HTS</shortName>
    </alternativeName>
</protein>
<sequence length="309" mass="35365">MPIRVPDELPAVSFLRNENVFVMASSRAKTQEIRPLKVLILNLMPKKIETENQFLRLLSNSPLQVDIQLLRVDSRESKNTPTEHLNNFYCDFEDIQDQNFDGLIVTGAPLGLVDFCDVAYWPQIERIIAWAKEHVTSTLFVCWAVQAALNILYGIPKMTREVKLSGIYQHQTLEPLALLTRGFDETFLAPHSRYADFPVEVLQQYTDLDILVSSEEAGAYLFASKDKRVAFVTGHPEYDVDTLAGEYQRDLAAGLNPQVPLNYFPSDDASLRPKASWRSHGHLLFANWLNYYVYQITPFDLRHMNPTLD</sequence>
<dbReference type="EC" id="2.3.1.46" evidence="1"/>
<dbReference type="EMBL" id="CP000668">
    <property type="protein sequence ID" value="ABP38593.1"/>
    <property type="molecule type" value="Genomic_DNA"/>
</dbReference>
<dbReference type="SMR" id="A4TH30"/>
<dbReference type="KEGG" id="ypp:YPDSF_0171"/>
<dbReference type="PATRIC" id="fig|386656.14.peg.1459"/>
<dbReference type="UniPathway" id="UPA00051">
    <property type="reaction ID" value="UER00075"/>
</dbReference>
<dbReference type="GO" id="GO:0005737">
    <property type="term" value="C:cytoplasm"/>
    <property type="evidence" value="ECO:0007669"/>
    <property type="project" value="UniProtKB-SubCell"/>
</dbReference>
<dbReference type="GO" id="GO:0004414">
    <property type="term" value="F:homoserine O-acetyltransferase activity"/>
    <property type="evidence" value="ECO:0007669"/>
    <property type="project" value="UniProtKB-UniRule"/>
</dbReference>
<dbReference type="GO" id="GO:0008899">
    <property type="term" value="F:homoserine O-succinyltransferase activity"/>
    <property type="evidence" value="ECO:0007669"/>
    <property type="project" value="UniProtKB-EC"/>
</dbReference>
<dbReference type="GO" id="GO:0019281">
    <property type="term" value="P:L-methionine biosynthetic process from homoserine via O-succinyl-L-homoserine and cystathionine"/>
    <property type="evidence" value="ECO:0007669"/>
    <property type="project" value="InterPro"/>
</dbReference>
<dbReference type="CDD" id="cd03131">
    <property type="entry name" value="GATase1_HTS"/>
    <property type="match status" value="1"/>
</dbReference>
<dbReference type="FunFam" id="3.40.50.880:FF:000004">
    <property type="entry name" value="Homoserine O-succinyltransferase"/>
    <property type="match status" value="1"/>
</dbReference>
<dbReference type="Gene3D" id="3.40.50.880">
    <property type="match status" value="1"/>
</dbReference>
<dbReference type="HAMAP" id="MF_00295">
    <property type="entry name" value="MetA_acyltransf"/>
    <property type="match status" value="1"/>
</dbReference>
<dbReference type="InterPro" id="IPR029062">
    <property type="entry name" value="Class_I_gatase-like"/>
</dbReference>
<dbReference type="InterPro" id="IPR005697">
    <property type="entry name" value="HST_MetA"/>
</dbReference>
<dbReference type="InterPro" id="IPR033752">
    <property type="entry name" value="MetA_family"/>
</dbReference>
<dbReference type="NCBIfam" id="TIGR01001">
    <property type="entry name" value="metA"/>
    <property type="match status" value="1"/>
</dbReference>
<dbReference type="PANTHER" id="PTHR20919">
    <property type="entry name" value="HOMOSERINE O-SUCCINYLTRANSFERASE"/>
    <property type="match status" value="1"/>
</dbReference>
<dbReference type="PANTHER" id="PTHR20919:SF0">
    <property type="entry name" value="HOMOSERINE O-SUCCINYLTRANSFERASE"/>
    <property type="match status" value="1"/>
</dbReference>
<dbReference type="Pfam" id="PF04204">
    <property type="entry name" value="HTS"/>
    <property type="match status" value="1"/>
</dbReference>
<dbReference type="PIRSF" id="PIRSF000450">
    <property type="entry name" value="H_ser_succinyltr"/>
    <property type="match status" value="1"/>
</dbReference>
<dbReference type="SUPFAM" id="SSF52317">
    <property type="entry name" value="Class I glutamine amidotransferase-like"/>
    <property type="match status" value="1"/>
</dbReference>
<evidence type="ECO:0000255" key="1">
    <source>
        <dbReference type="HAMAP-Rule" id="MF_00295"/>
    </source>
</evidence>
<gene>
    <name evidence="1" type="primary">metAS</name>
    <name type="ordered locus">YPDSF_0171</name>
</gene>
<feature type="chain" id="PRO_1000021863" description="Homoserine O-succinyltransferase">
    <location>
        <begin position="1"/>
        <end position="309"/>
    </location>
</feature>
<feature type="active site" description="Acyl-thioester intermediate" evidence="1">
    <location>
        <position position="142"/>
    </location>
</feature>
<feature type="active site" description="Proton acceptor" evidence="1">
    <location>
        <position position="235"/>
    </location>
</feature>
<feature type="active site" evidence="1">
    <location>
        <position position="237"/>
    </location>
</feature>
<feature type="binding site" evidence="1">
    <location>
        <position position="163"/>
    </location>
    <ligand>
        <name>substrate</name>
    </ligand>
</feature>
<feature type="binding site" evidence="1">
    <location>
        <position position="192"/>
    </location>
    <ligand>
        <name>substrate</name>
    </ligand>
</feature>
<feature type="binding site" evidence="1">
    <location>
        <position position="249"/>
    </location>
    <ligand>
        <name>substrate</name>
    </ligand>
</feature>
<feature type="site" description="Important for acyl-CoA specificity" evidence="1">
    <location>
        <position position="111"/>
    </location>
</feature>
<feature type="site" description="Important for substrate specificity" evidence="1">
    <location>
        <position position="192"/>
    </location>
</feature>
<name>METAS_YERPP</name>
<organism>
    <name type="scientific">Yersinia pestis (strain Pestoides F)</name>
    <dbReference type="NCBI Taxonomy" id="386656"/>
    <lineage>
        <taxon>Bacteria</taxon>
        <taxon>Pseudomonadati</taxon>
        <taxon>Pseudomonadota</taxon>
        <taxon>Gammaproteobacteria</taxon>
        <taxon>Enterobacterales</taxon>
        <taxon>Yersiniaceae</taxon>
        <taxon>Yersinia</taxon>
    </lineage>
</organism>
<keyword id="KW-0012">Acyltransferase</keyword>
<keyword id="KW-0028">Amino-acid biosynthesis</keyword>
<keyword id="KW-0963">Cytoplasm</keyword>
<keyword id="KW-0486">Methionine biosynthesis</keyword>
<keyword id="KW-0808">Transferase</keyword>
<accession>A4TH30</accession>
<proteinExistence type="inferred from homology"/>